<name>RK33_TOBAC</name>
<gene>
    <name type="primary">rpl33</name>
</gene>
<accession>P06393</accession>
<keyword id="KW-0150">Chloroplast</keyword>
<keyword id="KW-0934">Plastid</keyword>
<keyword id="KW-1185">Reference proteome</keyword>
<keyword id="KW-0687">Ribonucleoprotein</keyword>
<keyword id="KW-0689">Ribosomal protein</keyword>
<geneLocation type="chloroplast"/>
<sequence length="66" mass="7693">MAKGKDVRVTVILECTSCVRNSVDKVSRGISRYITQKNRHNTPNRLELKKFCPYCYKHTIHGEIKK</sequence>
<feature type="initiator methionine" description="Removed" evidence="1">
    <location>
        <position position="1"/>
    </location>
</feature>
<feature type="chain" id="PRO_0000170304" description="Large ribosomal subunit protein bL33c">
    <location>
        <begin position="2"/>
        <end position="66"/>
    </location>
</feature>
<organism>
    <name type="scientific">Nicotiana tabacum</name>
    <name type="common">Common tobacco</name>
    <dbReference type="NCBI Taxonomy" id="4097"/>
    <lineage>
        <taxon>Eukaryota</taxon>
        <taxon>Viridiplantae</taxon>
        <taxon>Streptophyta</taxon>
        <taxon>Embryophyta</taxon>
        <taxon>Tracheophyta</taxon>
        <taxon>Spermatophyta</taxon>
        <taxon>Magnoliopsida</taxon>
        <taxon>eudicotyledons</taxon>
        <taxon>Gunneridae</taxon>
        <taxon>Pentapetalae</taxon>
        <taxon>asterids</taxon>
        <taxon>lamiids</taxon>
        <taxon>Solanales</taxon>
        <taxon>Solanaceae</taxon>
        <taxon>Nicotianoideae</taxon>
        <taxon>Nicotianeae</taxon>
        <taxon>Nicotiana</taxon>
    </lineage>
</organism>
<reference key="1">
    <citation type="journal article" date="1986" name="EMBO J.">
        <title>The complete nucleotide sequence of the tobacco chloroplast genome: its gene organization and expression.</title>
        <authorList>
            <person name="Shinozaki K."/>
            <person name="Ohme M."/>
            <person name="Tanaka M."/>
            <person name="Wakasugi T."/>
            <person name="Hayashida N."/>
            <person name="Matsubayashi T."/>
            <person name="Zaita N."/>
            <person name="Chunwongse J."/>
            <person name="Obokata J."/>
            <person name="Yamaguchi-Shinozaki K."/>
            <person name="Ohto C."/>
            <person name="Torazawa K."/>
            <person name="Meng B.-Y."/>
            <person name="Sugita M."/>
            <person name="Deno H."/>
            <person name="Kamogashira T."/>
            <person name="Yamada K."/>
            <person name="Kusuda J."/>
            <person name="Takaiwa F."/>
            <person name="Kato A."/>
            <person name="Tohdoh N."/>
            <person name="Shimada H."/>
            <person name="Sugiura M."/>
        </authorList>
    </citation>
    <scope>NUCLEOTIDE SEQUENCE [LARGE SCALE GENOMIC DNA]</scope>
    <source>
        <strain>cv. Bright Yellow 4</strain>
    </source>
</reference>
<proteinExistence type="inferred from homology"/>
<evidence type="ECO:0000250" key="1"/>
<evidence type="ECO:0000305" key="2"/>
<protein>
    <recommendedName>
        <fullName evidence="2">Large ribosomal subunit protein bL33c</fullName>
    </recommendedName>
    <alternativeName>
        <fullName>50S ribosomal protein L33, chloroplastic</fullName>
    </alternativeName>
</protein>
<comment type="subcellular location">
    <subcellularLocation>
        <location>Plastid</location>
        <location>Chloroplast</location>
    </subcellularLocation>
</comment>
<comment type="similarity">
    <text evidence="2">Belongs to the bacterial ribosomal protein bL33 family.</text>
</comment>
<dbReference type="EMBL" id="Z00044">
    <property type="protein sequence ID" value="CAA77370.1"/>
    <property type="molecule type" value="Genomic_DNA"/>
</dbReference>
<dbReference type="PIR" id="A02835">
    <property type="entry name" value="R5NT33"/>
</dbReference>
<dbReference type="RefSeq" id="NP_054522.1">
    <property type="nucleotide sequence ID" value="NC_001879.2"/>
</dbReference>
<dbReference type="GeneID" id="800444"/>
<dbReference type="KEGG" id="nta:800444"/>
<dbReference type="OMA" id="ECTEHKA"/>
<dbReference type="OrthoDB" id="361870at2759"/>
<dbReference type="Proteomes" id="UP000084051">
    <property type="component" value="Unplaced"/>
</dbReference>
<dbReference type="GO" id="GO:0009507">
    <property type="term" value="C:chloroplast"/>
    <property type="evidence" value="ECO:0007669"/>
    <property type="project" value="UniProtKB-SubCell"/>
</dbReference>
<dbReference type="GO" id="GO:1990904">
    <property type="term" value="C:ribonucleoprotein complex"/>
    <property type="evidence" value="ECO:0007669"/>
    <property type="project" value="UniProtKB-KW"/>
</dbReference>
<dbReference type="GO" id="GO:0005840">
    <property type="term" value="C:ribosome"/>
    <property type="evidence" value="ECO:0007669"/>
    <property type="project" value="UniProtKB-KW"/>
</dbReference>
<dbReference type="GO" id="GO:0003735">
    <property type="term" value="F:structural constituent of ribosome"/>
    <property type="evidence" value="ECO:0007669"/>
    <property type="project" value="InterPro"/>
</dbReference>
<dbReference type="GO" id="GO:0006412">
    <property type="term" value="P:translation"/>
    <property type="evidence" value="ECO:0007669"/>
    <property type="project" value="UniProtKB-UniRule"/>
</dbReference>
<dbReference type="Gene3D" id="2.20.28.120">
    <property type="entry name" value="Ribosomal protein L33"/>
    <property type="match status" value="1"/>
</dbReference>
<dbReference type="HAMAP" id="MF_00294">
    <property type="entry name" value="Ribosomal_bL33"/>
    <property type="match status" value="1"/>
</dbReference>
<dbReference type="InterPro" id="IPR001705">
    <property type="entry name" value="Ribosomal_bL33"/>
</dbReference>
<dbReference type="InterPro" id="IPR018264">
    <property type="entry name" value="Ribosomal_bL33_CS"/>
</dbReference>
<dbReference type="InterPro" id="IPR038584">
    <property type="entry name" value="Ribosomal_bL33_sf"/>
</dbReference>
<dbReference type="InterPro" id="IPR011332">
    <property type="entry name" value="Ribosomal_zn-bd"/>
</dbReference>
<dbReference type="NCBIfam" id="NF001764">
    <property type="entry name" value="PRK00504.1"/>
    <property type="match status" value="1"/>
</dbReference>
<dbReference type="NCBIfam" id="NF001860">
    <property type="entry name" value="PRK00595.1"/>
    <property type="match status" value="1"/>
</dbReference>
<dbReference type="NCBIfam" id="TIGR01023">
    <property type="entry name" value="rpmG_bact"/>
    <property type="match status" value="1"/>
</dbReference>
<dbReference type="PANTHER" id="PTHR43168">
    <property type="entry name" value="50S RIBOSOMAL PROTEIN L33, CHLOROPLASTIC"/>
    <property type="match status" value="1"/>
</dbReference>
<dbReference type="PANTHER" id="PTHR43168:SF2">
    <property type="entry name" value="LARGE RIBOSOMAL SUBUNIT PROTEIN BL33C"/>
    <property type="match status" value="1"/>
</dbReference>
<dbReference type="Pfam" id="PF00471">
    <property type="entry name" value="Ribosomal_L33"/>
    <property type="match status" value="1"/>
</dbReference>
<dbReference type="SUPFAM" id="SSF57829">
    <property type="entry name" value="Zn-binding ribosomal proteins"/>
    <property type="match status" value="1"/>
</dbReference>
<dbReference type="PROSITE" id="PS00582">
    <property type="entry name" value="RIBOSOMAL_L33"/>
    <property type="match status" value="1"/>
</dbReference>